<dbReference type="EMBL" id="AE005176">
    <property type="protein sequence ID" value="AAK06191.1"/>
    <property type="molecule type" value="Genomic_DNA"/>
</dbReference>
<dbReference type="PIR" id="E86886">
    <property type="entry name" value="E86886"/>
</dbReference>
<dbReference type="RefSeq" id="NP_268250.1">
    <property type="nucleotide sequence ID" value="NC_002662.1"/>
</dbReference>
<dbReference type="RefSeq" id="WP_010906301.1">
    <property type="nucleotide sequence ID" value="NC_002662.1"/>
</dbReference>
<dbReference type="SMR" id="Q9CDW8"/>
<dbReference type="PaxDb" id="272623-L0380"/>
<dbReference type="EnsemblBacteria" id="AAK06191">
    <property type="protein sequence ID" value="AAK06191"/>
    <property type="gene ID" value="L0380"/>
</dbReference>
<dbReference type="KEGG" id="lla:L0380"/>
<dbReference type="PATRIC" id="fig|272623.7.peg.2252"/>
<dbReference type="eggNOG" id="COG0092">
    <property type="taxonomic scope" value="Bacteria"/>
</dbReference>
<dbReference type="HOGENOM" id="CLU_058591_0_2_9"/>
<dbReference type="OrthoDB" id="9806396at2"/>
<dbReference type="Proteomes" id="UP000002196">
    <property type="component" value="Chromosome"/>
</dbReference>
<dbReference type="GO" id="GO:0022627">
    <property type="term" value="C:cytosolic small ribosomal subunit"/>
    <property type="evidence" value="ECO:0007669"/>
    <property type="project" value="TreeGrafter"/>
</dbReference>
<dbReference type="GO" id="GO:0003729">
    <property type="term" value="F:mRNA binding"/>
    <property type="evidence" value="ECO:0007669"/>
    <property type="project" value="UniProtKB-UniRule"/>
</dbReference>
<dbReference type="GO" id="GO:0019843">
    <property type="term" value="F:rRNA binding"/>
    <property type="evidence" value="ECO:0007669"/>
    <property type="project" value="UniProtKB-UniRule"/>
</dbReference>
<dbReference type="GO" id="GO:0003735">
    <property type="term" value="F:structural constituent of ribosome"/>
    <property type="evidence" value="ECO:0007669"/>
    <property type="project" value="InterPro"/>
</dbReference>
<dbReference type="GO" id="GO:0006412">
    <property type="term" value="P:translation"/>
    <property type="evidence" value="ECO:0007669"/>
    <property type="project" value="UniProtKB-UniRule"/>
</dbReference>
<dbReference type="CDD" id="cd02412">
    <property type="entry name" value="KH-II_30S_S3"/>
    <property type="match status" value="1"/>
</dbReference>
<dbReference type="FunFam" id="3.30.1140.32:FF:000001">
    <property type="entry name" value="30S ribosomal protein S3"/>
    <property type="match status" value="1"/>
</dbReference>
<dbReference type="FunFam" id="3.30.300.20:FF:000001">
    <property type="entry name" value="30S ribosomal protein S3"/>
    <property type="match status" value="1"/>
</dbReference>
<dbReference type="Gene3D" id="3.30.300.20">
    <property type="match status" value="1"/>
</dbReference>
<dbReference type="Gene3D" id="3.30.1140.32">
    <property type="entry name" value="Ribosomal protein S3, C-terminal domain"/>
    <property type="match status" value="1"/>
</dbReference>
<dbReference type="HAMAP" id="MF_01309_B">
    <property type="entry name" value="Ribosomal_uS3_B"/>
    <property type="match status" value="1"/>
</dbReference>
<dbReference type="InterPro" id="IPR004087">
    <property type="entry name" value="KH_dom"/>
</dbReference>
<dbReference type="InterPro" id="IPR015946">
    <property type="entry name" value="KH_dom-like_a/b"/>
</dbReference>
<dbReference type="InterPro" id="IPR004044">
    <property type="entry name" value="KH_dom_type_2"/>
</dbReference>
<dbReference type="InterPro" id="IPR009019">
    <property type="entry name" value="KH_sf_prok-type"/>
</dbReference>
<dbReference type="InterPro" id="IPR036419">
    <property type="entry name" value="Ribosomal_S3_C_sf"/>
</dbReference>
<dbReference type="InterPro" id="IPR005704">
    <property type="entry name" value="Ribosomal_uS3_bac-typ"/>
</dbReference>
<dbReference type="InterPro" id="IPR001351">
    <property type="entry name" value="Ribosomal_uS3_C"/>
</dbReference>
<dbReference type="InterPro" id="IPR018280">
    <property type="entry name" value="Ribosomal_uS3_CS"/>
</dbReference>
<dbReference type="NCBIfam" id="TIGR01009">
    <property type="entry name" value="rpsC_bact"/>
    <property type="match status" value="1"/>
</dbReference>
<dbReference type="PANTHER" id="PTHR11760">
    <property type="entry name" value="30S/40S RIBOSOMAL PROTEIN S3"/>
    <property type="match status" value="1"/>
</dbReference>
<dbReference type="PANTHER" id="PTHR11760:SF19">
    <property type="entry name" value="SMALL RIBOSOMAL SUBUNIT PROTEIN US3C"/>
    <property type="match status" value="1"/>
</dbReference>
<dbReference type="Pfam" id="PF07650">
    <property type="entry name" value="KH_2"/>
    <property type="match status" value="1"/>
</dbReference>
<dbReference type="Pfam" id="PF00189">
    <property type="entry name" value="Ribosomal_S3_C"/>
    <property type="match status" value="1"/>
</dbReference>
<dbReference type="SMART" id="SM00322">
    <property type="entry name" value="KH"/>
    <property type="match status" value="1"/>
</dbReference>
<dbReference type="SUPFAM" id="SSF54814">
    <property type="entry name" value="Prokaryotic type KH domain (KH-domain type II)"/>
    <property type="match status" value="1"/>
</dbReference>
<dbReference type="SUPFAM" id="SSF54821">
    <property type="entry name" value="Ribosomal protein S3 C-terminal domain"/>
    <property type="match status" value="1"/>
</dbReference>
<dbReference type="PROSITE" id="PS50823">
    <property type="entry name" value="KH_TYPE_2"/>
    <property type="match status" value="1"/>
</dbReference>
<dbReference type="PROSITE" id="PS00548">
    <property type="entry name" value="RIBOSOMAL_S3"/>
    <property type="match status" value="1"/>
</dbReference>
<proteinExistence type="inferred from homology"/>
<name>RS3_LACLA</name>
<feature type="chain" id="PRO_0000130134" description="Small ribosomal subunit protein uS3">
    <location>
        <begin position="1"/>
        <end position="217"/>
    </location>
</feature>
<feature type="domain" description="KH type-2" evidence="1">
    <location>
        <begin position="38"/>
        <end position="106"/>
    </location>
</feature>
<comment type="function">
    <text evidence="1">Binds the lower part of the 30S subunit head. Binds mRNA in the 70S ribosome, positioning it for translation.</text>
</comment>
<comment type="subunit">
    <text evidence="1">Part of the 30S ribosomal subunit. Forms a tight complex with proteins S10 and S14.</text>
</comment>
<comment type="similarity">
    <text evidence="1">Belongs to the universal ribosomal protein uS3 family.</text>
</comment>
<evidence type="ECO:0000255" key="1">
    <source>
        <dbReference type="HAMAP-Rule" id="MF_01309"/>
    </source>
</evidence>
<evidence type="ECO:0000305" key="2"/>
<accession>Q9CDW8</accession>
<protein>
    <recommendedName>
        <fullName evidence="1">Small ribosomal subunit protein uS3</fullName>
    </recommendedName>
    <alternativeName>
        <fullName evidence="2">30S ribosomal protein S3</fullName>
    </alternativeName>
</protein>
<sequence length="217" mass="24034">MGQKVHPIGMRVGVIRDWDAKWYAEKEYSDYLHEDLAIRQLIQTKLADASVSLIETERAINKVIVTLHTAKPGMVIGKSGANVDALRAELNKLTGKQVHINIVEIKKPDLDAHLVGEGIAKQLEARIAFRRAQKQAIQRAMRAGAKGIKTQVSGRLNGADIARAEGYSEGTVPLHTLRADIDYAWEEADTTYGKLGVKVWIYRGEVLPTKKSVKGEK</sequence>
<keyword id="KW-1185">Reference proteome</keyword>
<keyword id="KW-0687">Ribonucleoprotein</keyword>
<keyword id="KW-0689">Ribosomal protein</keyword>
<keyword id="KW-0694">RNA-binding</keyword>
<keyword id="KW-0699">rRNA-binding</keyword>
<gene>
    <name evidence="1" type="primary">rpsC</name>
    <name type="ordered locus">LL2093</name>
    <name type="ORF">L0380</name>
</gene>
<reference key="1">
    <citation type="journal article" date="2001" name="Genome Res.">
        <title>The complete genome sequence of the lactic acid bacterium Lactococcus lactis ssp. lactis IL1403.</title>
        <authorList>
            <person name="Bolotin A."/>
            <person name="Wincker P."/>
            <person name="Mauger S."/>
            <person name="Jaillon O."/>
            <person name="Malarme K."/>
            <person name="Weissenbach J."/>
            <person name="Ehrlich S.D."/>
            <person name="Sorokin A."/>
        </authorList>
    </citation>
    <scope>NUCLEOTIDE SEQUENCE [LARGE SCALE GENOMIC DNA]</scope>
    <source>
        <strain>IL1403</strain>
    </source>
</reference>
<organism>
    <name type="scientific">Lactococcus lactis subsp. lactis (strain IL1403)</name>
    <name type="common">Streptococcus lactis</name>
    <dbReference type="NCBI Taxonomy" id="272623"/>
    <lineage>
        <taxon>Bacteria</taxon>
        <taxon>Bacillati</taxon>
        <taxon>Bacillota</taxon>
        <taxon>Bacilli</taxon>
        <taxon>Lactobacillales</taxon>
        <taxon>Streptococcaceae</taxon>
        <taxon>Lactococcus</taxon>
    </lineage>
</organism>